<feature type="chain" id="PRO_0000426040" description="Zinc-finger homeodomain protein 4">
    <location>
        <begin position="1"/>
        <end position="417"/>
    </location>
</feature>
<feature type="zinc finger region" description="ZF-HD dimerization-type; degenerate" evidence="2">
    <location>
        <begin position="145"/>
        <end position="194"/>
    </location>
</feature>
<feature type="DNA-binding region" description="Homeobox">
    <location>
        <begin position="303"/>
        <end position="366"/>
    </location>
</feature>
<feature type="region of interest" description="Disordered" evidence="3">
    <location>
        <begin position="1"/>
        <end position="22"/>
    </location>
</feature>
<feature type="region of interest" description="Disordered" evidence="3">
    <location>
        <begin position="31"/>
        <end position="50"/>
    </location>
</feature>
<feature type="region of interest" description="Disordered" evidence="3">
    <location>
        <begin position="281"/>
        <end position="309"/>
    </location>
</feature>
<feature type="region of interest" description="Disordered" evidence="3">
    <location>
        <begin position="361"/>
        <end position="417"/>
    </location>
</feature>
<feature type="compositionally biased region" description="Polar residues" evidence="3">
    <location>
        <begin position="1"/>
        <end position="12"/>
    </location>
</feature>
<feature type="compositionally biased region" description="Low complexity" evidence="3">
    <location>
        <begin position="13"/>
        <end position="22"/>
    </location>
</feature>
<feature type="compositionally biased region" description="Acidic residues" evidence="3">
    <location>
        <begin position="36"/>
        <end position="46"/>
    </location>
</feature>
<feature type="compositionally biased region" description="Gly residues" evidence="3">
    <location>
        <begin position="286"/>
        <end position="298"/>
    </location>
</feature>
<feature type="compositionally biased region" description="Pro residues" evidence="3">
    <location>
        <begin position="368"/>
        <end position="417"/>
    </location>
</feature>
<feature type="site" description="Required for DNA-binding" evidence="1">
    <location>
        <position position="355"/>
    </location>
</feature>
<accession>Q53N87</accession>
<accession>A0A0P0Y0R8</accession>
<accession>Q0ITH9</accession>
<evidence type="ECO:0000250" key="1"/>
<evidence type="ECO:0000255" key="2">
    <source>
        <dbReference type="PROSITE-ProRule" id="PRU00856"/>
    </source>
</evidence>
<evidence type="ECO:0000256" key="3">
    <source>
        <dbReference type="SAM" id="MobiDB-lite"/>
    </source>
</evidence>
<evidence type="ECO:0000305" key="4"/>
<proteinExistence type="evidence at transcript level"/>
<keyword id="KW-0238">DNA-binding</keyword>
<keyword id="KW-0371">Homeobox</keyword>
<keyword id="KW-0479">Metal-binding</keyword>
<keyword id="KW-0539">Nucleus</keyword>
<keyword id="KW-1185">Reference proteome</keyword>
<keyword id="KW-0804">Transcription</keyword>
<keyword id="KW-0805">Transcription regulation</keyword>
<keyword id="KW-0862">Zinc</keyword>
<keyword id="KW-0863">Zinc-finger</keyword>
<organism>
    <name type="scientific">Oryza sativa subsp. japonica</name>
    <name type="common">Rice</name>
    <dbReference type="NCBI Taxonomy" id="39947"/>
    <lineage>
        <taxon>Eukaryota</taxon>
        <taxon>Viridiplantae</taxon>
        <taxon>Streptophyta</taxon>
        <taxon>Embryophyta</taxon>
        <taxon>Tracheophyta</taxon>
        <taxon>Spermatophyta</taxon>
        <taxon>Magnoliopsida</taxon>
        <taxon>Liliopsida</taxon>
        <taxon>Poales</taxon>
        <taxon>Poaceae</taxon>
        <taxon>BOP clade</taxon>
        <taxon>Oryzoideae</taxon>
        <taxon>Oryzeae</taxon>
        <taxon>Oryzinae</taxon>
        <taxon>Oryza</taxon>
        <taxon>Oryza sativa</taxon>
    </lineage>
</organism>
<sequence>MVSILQLQTRTEASPASSASAAATRIFAVRRQQQEQEGEEEEEEFEFQERMDLSGAQGELPIPMHASAAASPFAGMGAHGGAGGGHVVELHRHEHVGNNGQAMAMASPPPTNVAVAAEQEGSPVAGKKRGGMAVVGGGGGVAVKYRECLKNHAAAIGGNATDGCGEFMPSGEEGSLEALKCSACGCHRNFHRKEADDLDADSCAAALRAAAGRHHHLLGPALPHHHHKNGGGLLVAGGDPYGAAYAAARALPPPPPPPPHGHHHHHQIIMPLNMIHTSESDEMDVSGGGGGVGRGGGSSSSSKKRFRTKFTAEQKARMLEFAERVGWRLQKLDDAMVHHFCQEIGVKRRVLKVWMHNNKHNLAKKPLPSSPPPPPQIPPMSMPPSPPPPQIPPMSMPPSPPPMPMPMPPSPPQLKLE</sequence>
<gene>
    <name type="primary">ZHD4</name>
    <name type="ordered locus">Os11g0243300</name>
    <name type="ordered locus">LOC_Os11g13930</name>
</gene>
<comment type="function">
    <text evidence="1">Putative transcription factor.</text>
</comment>
<comment type="subunit">
    <text evidence="1">Homo- and heterodimer with other ZFHD proteins.</text>
</comment>
<comment type="subcellular location">
    <subcellularLocation>
        <location evidence="1">Nucleus</location>
    </subcellularLocation>
</comment>
<comment type="domain">
    <text>The homeodomain differs form the typical one by having namely 4 instead of 3 extra amino acids inserted in the loop between helix 1 and helix 2.</text>
</comment>
<comment type="sequence caution" evidence="4">
    <conflict type="erroneous gene model prediction">
        <sequence resource="EMBL-CDS" id="AAX95984"/>
    </conflict>
</comment>
<comment type="sequence caution" evidence="4">
    <conflict type="erroneous gene model prediction">
        <sequence resource="EMBL-CDS" id="ABA92344"/>
    </conflict>
</comment>
<comment type="sequence caution" evidence="4">
    <conflict type="erroneous gene model prediction">
        <sequence resource="EMBL-CDS" id="BAF27957"/>
    </conflict>
</comment>
<protein>
    <recommendedName>
        <fullName>Zinc-finger homeodomain protein 4</fullName>
        <shortName>OsZHD4</shortName>
    </recommendedName>
</protein>
<dbReference type="EMBL" id="AC135460">
    <property type="protein sequence ID" value="AAX95984.1"/>
    <property type="status" value="ALT_SEQ"/>
    <property type="molecule type" value="Genomic_DNA"/>
</dbReference>
<dbReference type="EMBL" id="DP000010">
    <property type="protein sequence ID" value="ABA92344.1"/>
    <property type="status" value="ALT_SEQ"/>
    <property type="molecule type" value="Genomic_DNA"/>
</dbReference>
<dbReference type="EMBL" id="AP008217">
    <property type="protein sequence ID" value="BAF27957.2"/>
    <property type="status" value="ALT_SEQ"/>
    <property type="molecule type" value="Genomic_DNA"/>
</dbReference>
<dbReference type="EMBL" id="AP014967">
    <property type="protein sequence ID" value="BAT13395.1"/>
    <property type="molecule type" value="Genomic_DNA"/>
</dbReference>
<dbReference type="EMBL" id="AK287714">
    <property type="status" value="NOT_ANNOTATED_CDS"/>
    <property type="molecule type" value="mRNA"/>
</dbReference>
<dbReference type="SMR" id="Q53N87"/>
<dbReference type="FunCoup" id="Q53N87">
    <property type="interactions" value="19"/>
</dbReference>
<dbReference type="PaxDb" id="39947-Q53N87"/>
<dbReference type="EnsemblPlants" id="Os11t0243300-01">
    <property type="protein sequence ID" value="Os11t0243300-01"/>
    <property type="gene ID" value="Os11g0243300"/>
</dbReference>
<dbReference type="Gramene" id="Os11t0243300-01">
    <property type="protein sequence ID" value="Os11t0243300-01"/>
    <property type="gene ID" value="Os11g0243300"/>
</dbReference>
<dbReference type="KEGG" id="dosa:Os11g0243300"/>
<dbReference type="eggNOG" id="ENOG502QSB4">
    <property type="taxonomic scope" value="Eukaryota"/>
</dbReference>
<dbReference type="HOGENOM" id="CLU_039237_2_1_1"/>
<dbReference type="InParanoid" id="Q53N87"/>
<dbReference type="OMA" id="ELHRHEH"/>
<dbReference type="OrthoDB" id="694008at2759"/>
<dbReference type="Proteomes" id="UP000000763">
    <property type="component" value="Chromosome 11"/>
</dbReference>
<dbReference type="Proteomes" id="UP000059680">
    <property type="component" value="Chromosome 11"/>
</dbReference>
<dbReference type="GO" id="GO:0005634">
    <property type="term" value="C:nucleus"/>
    <property type="evidence" value="ECO:0000318"/>
    <property type="project" value="GO_Central"/>
</dbReference>
<dbReference type="GO" id="GO:0003700">
    <property type="term" value="F:DNA-binding transcription factor activity"/>
    <property type="evidence" value="ECO:0000318"/>
    <property type="project" value="GO_Central"/>
</dbReference>
<dbReference type="GO" id="GO:0000976">
    <property type="term" value="F:transcription cis-regulatory region binding"/>
    <property type="evidence" value="ECO:0000318"/>
    <property type="project" value="GO_Central"/>
</dbReference>
<dbReference type="GO" id="GO:0008270">
    <property type="term" value="F:zinc ion binding"/>
    <property type="evidence" value="ECO:0007669"/>
    <property type="project" value="UniProtKB-KW"/>
</dbReference>
<dbReference type="GO" id="GO:0006355">
    <property type="term" value="P:regulation of DNA-templated transcription"/>
    <property type="evidence" value="ECO:0000318"/>
    <property type="project" value="GO_Central"/>
</dbReference>
<dbReference type="FunFam" id="1.10.10.60:FF:000257">
    <property type="entry name" value="Zinc-finger homeodomain protein 2"/>
    <property type="match status" value="1"/>
</dbReference>
<dbReference type="Gene3D" id="1.10.10.60">
    <property type="entry name" value="Homeodomain-like"/>
    <property type="match status" value="1"/>
</dbReference>
<dbReference type="InterPro" id="IPR009057">
    <property type="entry name" value="Homeodomain-like_sf"/>
</dbReference>
<dbReference type="InterPro" id="IPR006455">
    <property type="entry name" value="Homeodomain_ZF_HD"/>
</dbReference>
<dbReference type="InterPro" id="IPR006456">
    <property type="entry name" value="ZF_HD_homeobox_Cys/His_dimer"/>
</dbReference>
<dbReference type="NCBIfam" id="TIGR01565">
    <property type="entry name" value="homeo_ZF_HD"/>
    <property type="match status" value="1"/>
</dbReference>
<dbReference type="NCBIfam" id="TIGR01566">
    <property type="entry name" value="ZF_HD_prot_N"/>
    <property type="match status" value="1"/>
</dbReference>
<dbReference type="PANTHER" id="PTHR31948">
    <property type="entry name" value="ZINC-FINGER HOMEODOMAIN PROTEIN 2"/>
    <property type="match status" value="1"/>
</dbReference>
<dbReference type="PANTHER" id="PTHR31948:SF163">
    <property type="entry name" value="ZINC-FINGER HOMEODOMAIN PROTEIN 3"/>
    <property type="match status" value="1"/>
</dbReference>
<dbReference type="Pfam" id="PF04770">
    <property type="entry name" value="ZF-HD_dimer"/>
    <property type="match status" value="1"/>
</dbReference>
<dbReference type="SUPFAM" id="SSF46689">
    <property type="entry name" value="Homeodomain-like"/>
    <property type="match status" value="1"/>
</dbReference>
<dbReference type="PROSITE" id="PS51523">
    <property type="entry name" value="ZF_HD_DIMER"/>
    <property type="match status" value="1"/>
</dbReference>
<reference key="1">
    <citation type="journal article" date="2005" name="BMC Biol.">
        <title>The sequence of rice chromosomes 11 and 12, rich in disease resistance genes and recent gene duplications.</title>
        <authorList>
            <consortium name="The rice chromosomes 11 and 12 sequencing consortia"/>
        </authorList>
    </citation>
    <scope>NUCLEOTIDE SEQUENCE [LARGE SCALE GENOMIC DNA]</scope>
    <source>
        <strain>cv. Nipponbare</strain>
    </source>
</reference>
<reference key="2">
    <citation type="journal article" date="2005" name="Nature">
        <title>The map-based sequence of the rice genome.</title>
        <authorList>
            <consortium name="International rice genome sequencing project (IRGSP)"/>
        </authorList>
    </citation>
    <scope>NUCLEOTIDE SEQUENCE [LARGE SCALE GENOMIC DNA]</scope>
    <source>
        <strain>cv. Nipponbare</strain>
    </source>
</reference>
<reference key="3">
    <citation type="journal article" date="2008" name="Nucleic Acids Res.">
        <title>The rice annotation project database (RAP-DB): 2008 update.</title>
        <authorList>
            <consortium name="The rice annotation project (RAP)"/>
        </authorList>
    </citation>
    <scope>GENOME REANNOTATION</scope>
    <source>
        <strain>cv. Nipponbare</strain>
    </source>
</reference>
<reference key="4">
    <citation type="journal article" date="2013" name="Rice">
        <title>Improvement of the Oryza sativa Nipponbare reference genome using next generation sequence and optical map data.</title>
        <authorList>
            <person name="Kawahara Y."/>
            <person name="de la Bastide M."/>
            <person name="Hamilton J.P."/>
            <person name="Kanamori H."/>
            <person name="McCombie W.R."/>
            <person name="Ouyang S."/>
            <person name="Schwartz D.C."/>
            <person name="Tanaka T."/>
            <person name="Wu J."/>
            <person name="Zhou S."/>
            <person name="Childs K.L."/>
            <person name="Davidson R.M."/>
            <person name="Lin H."/>
            <person name="Quesada-Ocampo L."/>
            <person name="Vaillancourt B."/>
            <person name="Sakai H."/>
            <person name="Lee S.S."/>
            <person name="Kim J."/>
            <person name="Numa H."/>
            <person name="Itoh T."/>
            <person name="Buell C.R."/>
            <person name="Matsumoto T."/>
        </authorList>
    </citation>
    <scope>GENOME REANNOTATION</scope>
    <source>
        <strain>cv. Nipponbare</strain>
    </source>
</reference>
<reference key="5">
    <citation type="submission" date="2007-09" db="EMBL/GenBank/DDBJ databases">
        <title>Oryza sativa full length cDNA.</title>
        <authorList>
            <consortium name="The rice full-length cDNA consortium"/>
        </authorList>
    </citation>
    <scope>NUCLEOTIDE SEQUENCE [LARGE SCALE MRNA]</scope>
    <source>
        <strain>cv. Nipponbare</strain>
    </source>
</reference>
<reference key="6">
    <citation type="journal article" date="2008" name="J. Integr. Plant Biol.">
        <title>Phylogenetic analysis of the plant-specific zinc finger-homeobox and mini zinc finger gene families.</title>
        <authorList>
            <person name="Hu W."/>
            <person name="dePamphilis C.W."/>
            <person name="Ma H."/>
        </authorList>
    </citation>
    <scope>GENE FAMILY</scope>
    <scope>NOMENCLATURE</scope>
</reference>
<name>ZHD4_ORYSJ</name>